<name>HMDH_BLAGE</name>
<proteinExistence type="evidence at transcript level"/>
<evidence type="ECO:0000250" key="1"/>
<evidence type="ECO:0000255" key="2"/>
<evidence type="ECO:0000255" key="3">
    <source>
        <dbReference type="PROSITE-ProRule" id="PRU10003"/>
    </source>
</evidence>
<evidence type="ECO:0000256" key="4">
    <source>
        <dbReference type="SAM" id="MobiDB-lite"/>
    </source>
</evidence>
<evidence type="ECO:0000305" key="5"/>
<accession>P54960</accession>
<reference key="1">
    <citation type="journal article" date="1993" name="Eur. J. Biochem.">
        <title>Molecular cloning, developmental pattern and tissue expression of 3-hydroxy-3-methylglutaryl coenzyme A reductase of the cockroach Blattella germanica.</title>
        <authorList>
            <person name="Martinez-Gonzalez J."/>
            <person name="Buesa C."/>
            <person name="Piulachs M.D."/>
            <person name="Belles X."/>
            <person name="Hegardt F.G."/>
        </authorList>
    </citation>
    <scope>NUCLEOTIDE SEQUENCE [MRNA]</scope>
</reference>
<sequence length="856" mass="93157">MVGRLFRAHGQFCASHPWEVIVATLTLTVCMLTVDQRPLGLPPGWGHNCITLEEYNAADMIVMTLIRCVAVLYSYYQFCHLQKLGSKYILGIAGLFTVFSSFVFSSSVINFLGSDVSDLKDALFFFLLLIDLSKATVLAQFALSSRSQDEVKHNIARGIAMLGPTITLDTVVETLVIGVGMLSGVRRLEVLCCFACMSVIVNYVVFMTFYPACLSLILELSRSGESGRPAWHDKSLIIKALHEEDQKPNPVVQRVKVIMSAGLMLVHAHRWVRCLSIALWPDLTSLRYFCTHCDTGVSYSRWSFASEGEELPTVKLVTGDSVVNSNSTDDAQLHYYIMRWLTVSADHIVILILLLALAVKFVFFETRDELTTTRGMDGWVEVSSPVEHKYVQTEQPSCSAPEQPLEEPPASNRSIDECLSVCKSDVGAQALSDCEVMALVTSGHIAGYQLEKVVRNPERGVGIRRQILTKTADLKDALDNLPYKNYDYLKVMGACCENVIGYMPVPVGVAGPLNLDGRLVHVPLATTEGCLVASTNRGMRALMRCGVTSRIVADGMTRGPVVRFPNIDRASEAMLWMQVPYNFEQIKKNFDSTSRFARLSKIHIRVAGRHLFIRFIATTGDAMGMNMLSKGTEVALAYVQQVYPDMEILSLSGNFCTDKKPAAVNWIEGRGKSVVCEAIVPADIIKSVLKTSVQALMDVNITKNLIGSAVAGSIGGFNAHAANIVTAIFIATGQDPAQNVGSSNCMTLMEPWGEDGKDLYVSCTMPSIEIGTIGGGTVLPPQAACLDMLGVRGANEMCPGENANTLARIVCGTVLAGELSLMSALAAGHLVKSHMRHNRSSVSTSGSEPSTPACKS</sequence>
<feature type="chain" id="PRO_0000114430" description="3-hydroxy-3-methylglutaryl-coenzyme A reductase">
    <location>
        <begin position="1"/>
        <end position="856"/>
    </location>
</feature>
<feature type="transmembrane region" description="Helical" evidence="2">
    <location>
        <begin position="12"/>
        <end position="32"/>
    </location>
</feature>
<feature type="transmembrane region" description="Helical" evidence="2">
    <location>
        <begin position="89"/>
        <end position="109"/>
    </location>
</feature>
<feature type="transmembrane region" description="Helical" evidence="2">
    <location>
        <begin position="123"/>
        <end position="143"/>
    </location>
</feature>
<feature type="transmembrane region" description="Helical" evidence="2">
    <location>
        <begin position="190"/>
        <end position="210"/>
    </location>
</feature>
<feature type="transmembrane region" description="Helical" evidence="2">
    <location>
        <begin position="344"/>
        <end position="364"/>
    </location>
</feature>
<feature type="region of interest" description="Linker">
    <location>
        <begin position="365"/>
        <end position="443"/>
    </location>
</feature>
<feature type="region of interest" description="Catalytic">
    <location>
        <begin position="443"/>
        <end position="771"/>
    </location>
</feature>
<feature type="region of interest" description="Disordered" evidence="4">
    <location>
        <begin position="836"/>
        <end position="856"/>
    </location>
</feature>
<feature type="compositionally biased region" description="Low complexity" evidence="4">
    <location>
        <begin position="840"/>
        <end position="856"/>
    </location>
</feature>
<feature type="active site" description="Charge relay system" evidence="1">
    <location>
        <position position="528"/>
    </location>
</feature>
<feature type="active site" description="Charge relay system" evidence="1">
    <location>
        <position position="659"/>
    </location>
</feature>
<feature type="active site" description="Charge relay system" evidence="1">
    <location>
        <position position="735"/>
    </location>
</feature>
<feature type="active site" description="Proton donor" evidence="3">
    <location>
        <position position="834"/>
    </location>
</feature>
<feature type="glycosylation site" description="N-linked (GlcNAc...) asparagine" evidence="2">
    <location>
        <position position="326"/>
    </location>
</feature>
<feature type="glycosylation site" description="N-linked (GlcNAc...) asparagine" evidence="2">
    <location>
        <position position="412"/>
    </location>
</feature>
<feature type="glycosylation site" description="N-linked (GlcNAc...) asparagine" evidence="2">
    <location>
        <position position="700"/>
    </location>
</feature>
<feature type="glycosylation site" description="N-linked (GlcNAc...) asparagine" evidence="2">
    <location>
        <position position="838"/>
    </location>
</feature>
<comment type="function">
    <text>Synthesis of mevalonate for the production of non-sterol isoprenoids, which are essential for growth differentiation.</text>
</comment>
<comment type="catalytic activity">
    <reaction evidence="3">
        <text>(R)-mevalonate + 2 NADP(+) + CoA = (3S)-3-hydroxy-3-methylglutaryl-CoA + 2 NADPH + 2 H(+)</text>
        <dbReference type="Rhea" id="RHEA:15989"/>
        <dbReference type="ChEBI" id="CHEBI:15378"/>
        <dbReference type="ChEBI" id="CHEBI:36464"/>
        <dbReference type="ChEBI" id="CHEBI:43074"/>
        <dbReference type="ChEBI" id="CHEBI:57287"/>
        <dbReference type="ChEBI" id="CHEBI:57783"/>
        <dbReference type="ChEBI" id="CHEBI:58349"/>
        <dbReference type="EC" id="1.1.1.34"/>
    </reaction>
</comment>
<comment type="activity regulation">
    <text>The activity of HMG-CoA-reductase is suppressed by exogenous mevalonate.</text>
</comment>
<comment type="pathway">
    <text>Metabolic intermediate biosynthesis; (R)-mevalonate biosynthesis; (R)-mevalonate from acetyl-CoA: step 3/3.</text>
</comment>
<comment type="subcellular location">
    <subcellularLocation>
        <location>Endoplasmic reticulum membrane</location>
        <topology>Multi-pass membrane protein</topology>
    </subcellularLocation>
</comment>
<comment type="similarity">
    <text evidence="5">Belongs to the HMG-CoA reductase family.</text>
</comment>
<protein>
    <recommendedName>
        <fullName>3-hydroxy-3-methylglutaryl-coenzyme A reductase</fullName>
        <shortName>HMG-CoA reductase</shortName>
        <ecNumber>1.1.1.34</ecNumber>
    </recommendedName>
</protein>
<dbReference type="EC" id="1.1.1.34"/>
<dbReference type="EMBL" id="X70034">
    <property type="protein sequence ID" value="CAA49628.1"/>
    <property type="molecule type" value="mRNA"/>
</dbReference>
<dbReference type="PIR" id="S30338">
    <property type="entry name" value="S30338"/>
</dbReference>
<dbReference type="SMR" id="P54960"/>
<dbReference type="UniPathway" id="UPA00058">
    <property type="reaction ID" value="UER00103"/>
</dbReference>
<dbReference type="GO" id="GO:0005789">
    <property type="term" value="C:endoplasmic reticulum membrane"/>
    <property type="evidence" value="ECO:0007669"/>
    <property type="project" value="UniProtKB-SubCell"/>
</dbReference>
<dbReference type="GO" id="GO:0005778">
    <property type="term" value="C:peroxisomal membrane"/>
    <property type="evidence" value="ECO:0007669"/>
    <property type="project" value="TreeGrafter"/>
</dbReference>
<dbReference type="GO" id="GO:0004420">
    <property type="term" value="F:hydroxymethylglutaryl-CoA reductase (NADPH) activity"/>
    <property type="evidence" value="ECO:0007669"/>
    <property type="project" value="UniProtKB-EC"/>
</dbReference>
<dbReference type="GO" id="GO:0050661">
    <property type="term" value="F:NADP binding"/>
    <property type="evidence" value="ECO:0007669"/>
    <property type="project" value="InterPro"/>
</dbReference>
<dbReference type="GO" id="GO:0015936">
    <property type="term" value="P:coenzyme A metabolic process"/>
    <property type="evidence" value="ECO:0007669"/>
    <property type="project" value="InterPro"/>
</dbReference>
<dbReference type="GO" id="GO:0008299">
    <property type="term" value="P:isoprenoid biosynthetic process"/>
    <property type="evidence" value="ECO:0007669"/>
    <property type="project" value="UniProtKB-KW"/>
</dbReference>
<dbReference type="GO" id="GO:0016126">
    <property type="term" value="P:sterol biosynthetic process"/>
    <property type="evidence" value="ECO:0007669"/>
    <property type="project" value="TreeGrafter"/>
</dbReference>
<dbReference type="CDD" id="cd00643">
    <property type="entry name" value="HMG-CoA_reductase_classI"/>
    <property type="match status" value="1"/>
</dbReference>
<dbReference type="FunFam" id="1.10.3270.10:FF:000001">
    <property type="entry name" value="3-hydroxy-3-methylglutaryl coenzyme A reductase"/>
    <property type="match status" value="1"/>
</dbReference>
<dbReference type="FunFam" id="3.30.70.420:FF:000001">
    <property type="entry name" value="3-hydroxy-3-methylglutaryl coenzyme A reductase"/>
    <property type="match status" value="1"/>
</dbReference>
<dbReference type="FunFam" id="3.90.770.10:FF:000002">
    <property type="entry name" value="3-hydroxy-3-methylglutaryl coenzyme A reductase"/>
    <property type="match status" value="1"/>
</dbReference>
<dbReference type="Gene3D" id="3.90.770.10">
    <property type="entry name" value="3-hydroxy-3-methylglutaryl-coenzyme A Reductase, Chain A, domain 2"/>
    <property type="match status" value="1"/>
</dbReference>
<dbReference type="Gene3D" id="1.10.3270.10">
    <property type="entry name" value="HMGR, N-terminal domain"/>
    <property type="match status" value="1"/>
</dbReference>
<dbReference type="Gene3D" id="3.30.70.420">
    <property type="entry name" value="Hydroxymethylglutaryl-CoA reductase, class I/II, NAD/NADP-binding domain"/>
    <property type="match status" value="1"/>
</dbReference>
<dbReference type="InterPro" id="IPR002202">
    <property type="entry name" value="HMG_CoA_Rdtase"/>
</dbReference>
<dbReference type="InterPro" id="IPR023074">
    <property type="entry name" value="HMG_CoA_Rdtase_cat_sf"/>
</dbReference>
<dbReference type="InterPro" id="IPR023076">
    <property type="entry name" value="HMG_CoA_Rdtase_CS"/>
</dbReference>
<dbReference type="InterPro" id="IPR004554">
    <property type="entry name" value="HMG_CoA_Rdtase_eu_arc"/>
</dbReference>
<dbReference type="InterPro" id="IPR004816">
    <property type="entry name" value="HMG_CoA_Rdtase_metazoan"/>
</dbReference>
<dbReference type="InterPro" id="IPR023282">
    <property type="entry name" value="HMG_CoA_Rdtase_N"/>
</dbReference>
<dbReference type="InterPro" id="IPR009023">
    <property type="entry name" value="HMG_CoA_Rdtase_NAD(P)-bd_sf"/>
</dbReference>
<dbReference type="InterPro" id="IPR009029">
    <property type="entry name" value="HMG_CoA_Rdtase_sub-bd_dom_sf"/>
</dbReference>
<dbReference type="InterPro" id="IPR053958">
    <property type="entry name" value="HMGCR/SNAP/NPC1-like_SSD"/>
</dbReference>
<dbReference type="InterPro" id="IPR000731">
    <property type="entry name" value="SSD"/>
</dbReference>
<dbReference type="NCBIfam" id="TIGR00920">
    <property type="entry name" value="2A060605"/>
    <property type="match status" value="1"/>
</dbReference>
<dbReference type="NCBIfam" id="TIGR00533">
    <property type="entry name" value="HMG_CoA_R_NADP"/>
    <property type="match status" value="1"/>
</dbReference>
<dbReference type="PANTHER" id="PTHR10572">
    <property type="entry name" value="3-HYDROXY-3-METHYLGLUTARYL-COENZYME A REDUCTASE"/>
    <property type="match status" value="1"/>
</dbReference>
<dbReference type="PANTHER" id="PTHR10572:SF24">
    <property type="entry name" value="3-HYDROXY-3-METHYLGLUTARYL-COENZYME A REDUCTASE"/>
    <property type="match status" value="1"/>
</dbReference>
<dbReference type="Pfam" id="PF00368">
    <property type="entry name" value="HMG-CoA_red"/>
    <property type="match status" value="1"/>
</dbReference>
<dbReference type="Pfam" id="PF12349">
    <property type="entry name" value="Sterol-sensing"/>
    <property type="match status" value="1"/>
</dbReference>
<dbReference type="PRINTS" id="PR00071">
    <property type="entry name" value="HMGCOARDTASE"/>
</dbReference>
<dbReference type="SUPFAM" id="SSF55035">
    <property type="entry name" value="NAD-binding domain of HMG-CoA reductase"/>
    <property type="match status" value="1"/>
</dbReference>
<dbReference type="SUPFAM" id="SSF56542">
    <property type="entry name" value="Substrate-binding domain of HMG-CoA reductase"/>
    <property type="match status" value="1"/>
</dbReference>
<dbReference type="PROSITE" id="PS00066">
    <property type="entry name" value="HMG_COA_REDUCTASE_1"/>
    <property type="match status" value="1"/>
</dbReference>
<dbReference type="PROSITE" id="PS00318">
    <property type="entry name" value="HMG_COA_REDUCTASE_2"/>
    <property type="match status" value="1"/>
</dbReference>
<dbReference type="PROSITE" id="PS01192">
    <property type="entry name" value="HMG_COA_REDUCTASE_3"/>
    <property type="match status" value="1"/>
</dbReference>
<dbReference type="PROSITE" id="PS50065">
    <property type="entry name" value="HMG_COA_REDUCTASE_4"/>
    <property type="match status" value="1"/>
</dbReference>
<dbReference type="PROSITE" id="PS50156">
    <property type="entry name" value="SSD"/>
    <property type="match status" value="1"/>
</dbReference>
<keyword id="KW-0256">Endoplasmic reticulum</keyword>
<keyword id="KW-0325">Glycoprotein</keyword>
<keyword id="KW-0414">Isoprene biosynthesis</keyword>
<keyword id="KW-0472">Membrane</keyword>
<keyword id="KW-0521">NADP</keyword>
<keyword id="KW-0560">Oxidoreductase</keyword>
<keyword id="KW-0812">Transmembrane</keyword>
<keyword id="KW-1133">Transmembrane helix</keyword>
<organism>
    <name type="scientific">Blattella germanica</name>
    <name type="common">German cockroach</name>
    <name type="synonym">Blatta germanica</name>
    <dbReference type="NCBI Taxonomy" id="6973"/>
    <lineage>
        <taxon>Eukaryota</taxon>
        <taxon>Metazoa</taxon>
        <taxon>Ecdysozoa</taxon>
        <taxon>Arthropoda</taxon>
        <taxon>Hexapoda</taxon>
        <taxon>Insecta</taxon>
        <taxon>Pterygota</taxon>
        <taxon>Neoptera</taxon>
        <taxon>Polyneoptera</taxon>
        <taxon>Dictyoptera</taxon>
        <taxon>Blattodea</taxon>
        <taxon>Blaberoidea</taxon>
        <taxon>Blattellidae</taxon>
        <taxon>Blattella</taxon>
    </lineage>
</organism>